<keyword id="KW-0002">3D-structure</keyword>
<keyword id="KW-0025">Alternative splicing</keyword>
<keyword id="KW-1003">Cell membrane</keyword>
<keyword id="KW-0165">Cleavage on pair of basic residues</keyword>
<keyword id="KW-0202">Cytokine</keyword>
<keyword id="KW-0903">Direct protein sequencing</keyword>
<keyword id="KW-1015">Disulfide bond</keyword>
<keyword id="KW-0325">Glycoprotein</keyword>
<keyword id="KW-0391">Immunity</keyword>
<keyword id="KW-0472">Membrane</keyword>
<keyword id="KW-1267">Proteomics identification</keyword>
<keyword id="KW-1185">Reference proteome</keyword>
<keyword id="KW-0964">Secreted</keyword>
<keyword id="KW-0735">Signal-anchor</keyword>
<keyword id="KW-0812">Transmembrane</keyword>
<keyword id="KW-1133">Transmembrane helix</keyword>
<comment type="function">
    <text evidence="5">Cytokine that binds to TNFRSF13B/TACI and TNFRSF17/BCMA. TNFSF13/APRIL binds to the same 2 receptors. Together, they form a 2 ligands -2 receptors pathway involved in the stimulation of B- and T-cell function and the regulation of humoral immunity. A third B-cell specific BAFF-receptor (BAFFR/BR3) promotes the survival of mature B-cells and the B-cell response.</text>
</comment>
<comment type="function">
    <text evidence="1">Isoform 2 seems to inhibit isoform 1 secretion and bioactivity.</text>
</comment>
<comment type="function">
    <molecule>Isoform 3</molecule>
    <text evidence="5">Acts as a transcription factor for its own parent gene, in association with NF-kappa-B p50 subunit, at least in autoimmune and proliferative B-cell diseases. The presence of Delta4BAFF is essential for soluble BAFF release by IFNG/IFN-gamma-stimulated monocytes and for B-cell survival. It can directly or indirectly regulate the differential expression of a large number of genes involved in the innate immune response and the regulation of apoptosis.</text>
</comment>
<comment type="subunit">
    <text evidence="6 7">Homotrimer. Isoform 2 heteromultimerizes with isoform 1, probably limiting the amount of functional isoform 1 on the cell surface. Isoform 3 is unlikely form trimers or bind to BAFF receptors.</text>
</comment>
<comment type="interaction">
    <interactant intactId="EBI-519169">
        <id>Q9Y275</id>
    </interactant>
    <interactant intactId="EBI-286709">
        <id>P55060</id>
        <label>CSE1L</label>
    </interactant>
    <organismsDiffer>false</organismsDiffer>
    <experiments>2</experiments>
</comment>
<comment type="interaction">
    <interactant intactId="EBI-519169">
        <id>Q9Y275</id>
    </interactant>
    <interactant intactId="EBI-286758">
        <id>Q14974</id>
        <label>KPNB1</label>
    </interactant>
    <organismsDiffer>false</organismsDiffer>
    <experiments>2</experiments>
</comment>
<comment type="interaction">
    <interactant intactId="EBI-519169">
        <id>Q9Y275</id>
    </interactant>
    <interactant intactId="EBI-519160">
        <id>O14836</id>
        <label>TNFRSF13B</label>
    </interactant>
    <organismsDiffer>false</organismsDiffer>
    <experiments>7</experiments>
</comment>
<comment type="subcellular location">
    <subcellularLocation>
        <location>Cell membrane</location>
        <topology>Single-pass type II membrane protein</topology>
    </subcellularLocation>
</comment>
<comment type="subcellular location">
    <molecule>Tumor necrosis factor ligand superfamily member 13b, soluble form</molecule>
    <subcellularLocation>
        <location>Secreted</location>
    </subcellularLocation>
</comment>
<comment type="alternative products">
    <event type="alternative splicing"/>
    <isoform>
        <id>Q9Y275-1</id>
        <name>1</name>
        <sequence type="displayed"/>
    </isoform>
    <isoform>
        <id>Q9Y275-2</id>
        <name>2</name>
        <name>DeltaBAFF</name>
        <sequence type="described" ref="VSP_041183"/>
    </isoform>
    <isoform>
        <id>Q9Y275-3</id>
        <name>3</name>
        <name>Delta4BAFF</name>
        <sequence type="described" ref="VSP_047591 VSP_047592"/>
    </isoform>
</comment>
<comment type="tissue specificity">
    <text evidence="6">Abundantly expressed in peripheral blood Leukocytes and is specifically expressed in monocytes and macrophages. Also found in the spleen, lymph node, bone marrow, T-cells and dendritic cells. A lower expression seen in placenta, heart, lung, fetal liver, thymus, and pancreas. Isoform 2 is expressed in many myeloid cell lines.</text>
</comment>
<comment type="induction">
    <text>Up-regulated by exposure to IFNG/IFN-gamma. Down-regulated by phorbol myristate acetate/ionomycin treatment.</text>
</comment>
<comment type="PTM">
    <text>The soluble form derives from the membrane form by proteolytic processing.</text>
</comment>
<comment type="PTM">
    <text evidence="1">Isoform 2 is not efficiently shed from the membrane unlike isoform 1.</text>
</comment>
<comment type="PTM">
    <text>N-glycosylated.</text>
</comment>
<comment type="similarity">
    <text evidence="11">Belongs to the tumor necrosis factor family.</text>
</comment>
<comment type="online information" name="Protein Spotlight">
    <link uri="https://www.proteinspotlight.org/back_issues/077"/>
    <text>Proteic grace - Issue 77 of December 2006</text>
</comment>
<organism>
    <name type="scientific">Homo sapiens</name>
    <name type="common">Human</name>
    <dbReference type="NCBI Taxonomy" id="9606"/>
    <lineage>
        <taxon>Eukaryota</taxon>
        <taxon>Metazoa</taxon>
        <taxon>Chordata</taxon>
        <taxon>Craniata</taxon>
        <taxon>Vertebrata</taxon>
        <taxon>Euteleostomi</taxon>
        <taxon>Mammalia</taxon>
        <taxon>Eutheria</taxon>
        <taxon>Euarchontoglires</taxon>
        <taxon>Primates</taxon>
        <taxon>Haplorrhini</taxon>
        <taxon>Catarrhini</taxon>
        <taxon>Hominidae</taxon>
        <taxon>Homo</taxon>
    </lineage>
</organism>
<protein>
    <recommendedName>
        <fullName>Tumor necrosis factor ligand superfamily member 13B</fullName>
    </recommendedName>
    <alternativeName>
        <fullName>B lymphocyte stimulator</fullName>
        <shortName>BLyS</shortName>
    </alternativeName>
    <alternativeName>
        <fullName>B-cell-activating factor</fullName>
    </alternativeName>
    <alternativeName>
        <fullName>BAFF</fullName>
    </alternativeName>
    <alternativeName>
        <fullName>Dendritic cell-derived TNF-like molecule</fullName>
    </alternativeName>
    <alternativeName>
        <fullName>TNF- and APOL-related leukocyte expressed ligand 1</fullName>
        <shortName>TALL-1</shortName>
    </alternativeName>
    <cdAntigenName>CD257</cdAntigenName>
    <component>
        <recommendedName>
            <fullName>Tumor necrosis factor ligand superfamily member 13b, membrane form</fullName>
        </recommendedName>
    </component>
    <component>
        <recommendedName>
            <fullName>Tumor necrosis factor ligand superfamily member 13b, soluble form</fullName>
        </recommendedName>
    </component>
</protein>
<accession>Q9Y275</accession>
<accession>E0ADT7</accession>
<accession>Q6FHD6</accession>
<accession>Q7Z5J2</accession>
<evidence type="ECO:0000250" key="1"/>
<evidence type="ECO:0000255" key="2"/>
<evidence type="ECO:0000255" key="3">
    <source>
        <dbReference type="PROSITE-ProRule" id="PRU01387"/>
    </source>
</evidence>
<evidence type="ECO:0000256" key="4">
    <source>
        <dbReference type="SAM" id="MobiDB-lite"/>
    </source>
</evidence>
<evidence type="ECO:0000269" key="5">
    <source>
    </source>
</evidence>
<evidence type="ECO:0000269" key="6">
    <source>
    </source>
</evidence>
<evidence type="ECO:0000269" key="7">
    <source>
    </source>
</evidence>
<evidence type="ECO:0000269" key="8">
    <source ref="15"/>
</evidence>
<evidence type="ECO:0000303" key="9">
    <source>
    </source>
</evidence>
<evidence type="ECO:0000303" key="10">
    <source>
    </source>
</evidence>
<evidence type="ECO:0000305" key="11"/>
<evidence type="ECO:0007829" key="12">
    <source>
        <dbReference type="PDB" id="1KXG"/>
    </source>
</evidence>
<evidence type="ECO:0007829" key="13">
    <source>
        <dbReference type="PDB" id="4ZCH"/>
    </source>
</evidence>
<gene>
    <name type="primary">TNFSF13B</name>
    <name type="synonym">BAFF</name>
    <name type="synonym">BLYS</name>
    <name type="synonym">TALL1</name>
    <name type="synonym">TNFSF20</name>
    <name type="synonym">ZTNF4</name>
    <name type="ORF">UNQ401/PRO738</name>
</gene>
<sequence length="285" mass="31223">MDDSTEREQSRLTSCLKKREEMKLKECVSILPRKESPSVRSSKDGKLLAATLLLALLSCCLTVVSFYQVAALQGDLASLRAELQGHHAEKLPAGAGAPKAGLEEAPAVTAGLKIFEPPAPGEGNSSQNSRNKRAVQGPEETVTQDCLQLIADSETPTIQKGSYTFVPWLLSFKRGSALEEKENKILVKETGYFFIYGQVLYTDKTYAMGHLIQRKKVHVFGDELSLVTLFRCIQNMPETLPNNSCYSAGIAKLEEGDELQLAIPRENAQISLDGDVTFFGALKLL</sequence>
<name>TN13B_HUMAN</name>
<proteinExistence type="evidence at protein level"/>
<feature type="chain" id="PRO_0000034528" description="Tumor necrosis factor ligand superfamily member 13b, membrane form">
    <location>
        <begin position="1"/>
        <end position="285"/>
    </location>
</feature>
<feature type="chain" id="PRO_0000034529" description="Tumor necrosis factor ligand superfamily member 13b, soluble form">
    <location>
        <begin position="134"/>
        <end position="285"/>
    </location>
</feature>
<feature type="topological domain" description="Cytoplasmic" evidence="2">
    <location>
        <begin position="1"/>
        <end position="46"/>
    </location>
</feature>
<feature type="transmembrane region" description="Helical; Signal-anchor for type II membrane protein" evidence="2">
    <location>
        <begin position="47"/>
        <end position="67"/>
    </location>
</feature>
<feature type="topological domain" description="Extracellular" evidence="2">
    <location>
        <begin position="68"/>
        <end position="285"/>
    </location>
</feature>
<feature type="domain" description="THD" evidence="3">
    <location>
        <begin position="145"/>
        <end position="284"/>
    </location>
</feature>
<feature type="region of interest" description="Disordered" evidence="4">
    <location>
        <begin position="114"/>
        <end position="138"/>
    </location>
</feature>
<feature type="site" description="Cleavage">
    <location>
        <begin position="133"/>
        <end position="134"/>
    </location>
</feature>
<feature type="glycosylation site" description="N-linked (GlcNAc...) asparagine">
    <location>
        <position position="124"/>
    </location>
</feature>
<feature type="glycosylation site" description="N-linked (GlcNAc...) (high mannose) asparagine">
    <location>
        <position position="242"/>
    </location>
</feature>
<feature type="disulfide bond" evidence="3">
    <location>
        <begin position="232"/>
        <end position="245"/>
    </location>
</feature>
<feature type="splice variant" id="VSP_041183" description="In isoform 2." evidence="9">
    <location>
        <begin position="142"/>
        <end position="160"/>
    </location>
</feature>
<feature type="splice variant" id="VSP_047591" description="In isoform 3." evidence="10">
    <original>SYT</original>
    <variation>FIY</variation>
    <location>
        <begin position="162"/>
        <end position="164"/>
    </location>
</feature>
<feature type="splice variant" id="VSP_047592" description="In isoform 3." evidence="10">
    <location>
        <begin position="165"/>
        <end position="285"/>
    </location>
</feature>
<feature type="sequence variant" id="VAR_013483" description="In dbSNP:rs201543678." evidence="8">
    <original>A</original>
    <variation>T</variation>
    <location>
        <position position="105"/>
    </location>
</feature>
<feature type="strand" evidence="12">
    <location>
        <begin position="146"/>
        <end position="151"/>
    </location>
</feature>
<feature type="strand" evidence="12">
    <location>
        <begin position="158"/>
        <end position="160"/>
    </location>
</feature>
<feature type="strand" evidence="12">
    <location>
        <begin position="163"/>
        <end position="165"/>
    </location>
</feature>
<feature type="strand" evidence="12">
    <location>
        <begin position="168"/>
        <end position="181"/>
    </location>
</feature>
<feature type="strand" evidence="12">
    <location>
        <begin position="184"/>
        <end position="187"/>
    </location>
</feature>
<feature type="strand" evidence="12">
    <location>
        <begin position="191"/>
        <end position="201"/>
    </location>
</feature>
<feature type="strand" evidence="12">
    <location>
        <begin position="205"/>
        <end position="215"/>
    </location>
</feature>
<feature type="turn" evidence="13">
    <location>
        <begin position="219"/>
        <end position="222"/>
    </location>
</feature>
<feature type="strand" evidence="12">
    <location>
        <begin position="225"/>
        <end position="235"/>
    </location>
</feature>
<feature type="strand" evidence="12">
    <location>
        <begin position="238"/>
        <end position="240"/>
    </location>
</feature>
<feature type="strand" evidence="12">
    <location>
        <begin position="243"/>
        <end position="253"/>
    </location>
</feature>
<feature type="strand" evidence="12">
    <location>
        <begin position="258"/>
        <end position="265"/>
    </location>
</feature>
<feature type="turn" evidence="12">
    <location>
        <begin position="274"/>
        <end position="276"/>
    </location>
</feature>
<feature type="strand" evidence="12">
    <location>
        <begin position="277"/>
        <end position="283"/>
    </location>
</feature>
<dbReference type="EMBL" id="AF136293">
    <property type="protein sequence ID" value="AAD29421.1"/>
    <property type="molecule type" value="mRNA"/>
</dbReference>
<dbReference type="EMBL" id="AF116456">
    <property type="protein sequence ID" value="AAD25356.1"/>
    <property type="molecule type" value="mRNA"/>
</dbReference>
<dbReference type="EMBL" id="AF132600">
    <property type="protein sequence ID" value="AAD21092.1"/>
    <property type="molecule type" value="mRNA"/>
</dbReference>
<dbReference type="EMBL" id="AY302751">
    <property type="protein sequence ID" value="AAP83164.1"/>
    <property type="molecule type" value="mRNA"/>
</dbReference>
<dbReference type="EMBL" id="HM636064">
    <property type="protein sequence ID" value="ADK91575.1"/>
    <property type="molecule type" value="mRNA"/>
</dbReference>
<dbReference type="EMBL" id="AF186114">
    <property type="protein sequence ID" value="AAF01432.1"/>
    <property type="molecule type" value="mRNA"/>
</dbReference>
<dbReference type="EMBL" id="AF134715">
    <property type="protein sequence ID" value="AAF60219.1"/>
    <property type="molecule type" value="mRNA"/>
</dbReference>
<dbReference type="EMBL" id="AY129225">
    <property type="protein sequence ID" value="AAN08421.1"/>
    <property type="molecule type" value="mRNA"/>
</dbReference>
<dbReference type="EMBL" id="EF064706">
    <property type="protein sequence ID" value="ABK41889.1"/>
    <property type="molecule type" value="Genomic_DNA"/>
</dbReference>
<dbReference type="EMBL" id="AY358881">
    <property type="protein sequence ID" value="AAQ89240.1"/>
    <property type="molecule type" value="mRNA"/>
</dbReference>
<dbReference type="EMBL" id="CR541818">
    <property type="protein sequence ID" value="CAG46617.1"/>
    <property type="molecule type" value="mRNA"/>
</dbReference>
<dbReference type="EMBL" id="AL157762">
    <property type="status" value="NOT_ANNOTATED_CDS"/>
    <property type="molecule type" value="Genomic_DNA"/>
</dbReference>
<dbReference type="EMBL" id="CH471085">
    <property type="protein sequence ID" value="EAX09099.1"/>
    <property type="molecule type" value="Genomic_DNA"/>
</dbReference>
<dbReference type="EMBL" id="BC020674">
    <property type="protein sequence ID" value="AAH20674.1"/>
    <property type="molecule type" value="mRNA"/>
</dbReference>
<dbReference type="EMBL" id="AB073225">
    <property type="protein sequence ID" value="BAB90856.1"/>
    <property type="molecule type" value="Genomic_DNA"/>
</dbReference>
<dbReference type="CCDS" id="CCDS45067.1">
    <molecule id="Q9Y275-2"/>
</dbReference>
<dbReference type="CCDS" id="CCDS9509.1">
    <molecule id="Q9Y275-1"/>
</dbReference>
<dbReference type="RefSeq" id="NP_001139117.1">
    <molecule id="Q9Y275-2"/>
    <property type="nucleotide sequence ID" value="NM_001145645.2"/>
</dbReference>
<dbReference type="RefSeq" id="NP_006564.1">
    <molecule id="Q9Y275-1"/>
    <property type="nucleotide sequence ID" value="NM_006573.5"/>
</dbReference>
<dbReference type="PDB" id="1JH5">
    <property type="method" value="X-ray"/>
    <property type="resolution" value="3.00 A"/>
    <property type="chains" value="A/B/C/D/E/F/G/H/I/J=142-285"/>
</dbReference>
<dbReference type="PDB" id="1KD7">
    <property type="method" value="X-ray"/>
    <property type="resolution" value="2.80 A"/>
    <property type="chains" value="A/B/C/K/L/M=133-285"/>
</dbReference>
<dbReference type="PDB" id="1KXG">
    <property type="method" value="X-ray"/>
    <property type="resolution" value="2.00 A"/>
    <property type="chains" value="A/B/C/D/E/F=134-285"/>
</dbReference>
<dbReference type="PDB" id="1OQD">
    <property type="method" value="X-ray"/>
    <property type="resolution" value="2.60 A"/>
    <property type="chains" value="A/B/C/D/E/F/G/H/I/J=142-285"/>
</dbReference>
<dbReference type="PDB" id="1OQE">
    <property type="method" value="X-ray"/>
    <property type="resolution" value="2.50 A"/>
    <property type="chains" value="A/B/C/D/E/F/G/H/I/J=142-285"/>
</dbReference>
<dbReference type="PDB" id="1OSG">
    <property type="method" value="X-ray"/>
    <property type="resolution" value="3.00 A"/>
    <property type="chains" value="A/B/C/D/E/F=82-285"/>
</dbReference>
<dbReference type="PDB" id="3V56">
    <property type="method" value="X-ray"/>
    <property type="resolution" value="3.00 A"/>
    <property type="chains" value="A/B/C/D/E/F=82-285"/>
</dbReference>
<dbReference type="PDB" id="4V46">
    <property type="method" value="X-ray"/>
    <property type="resolution" value="3.30 A"/>
    <property type="chains" value="A0/A1/A2/A3/A4/A5/A6/A7/A8/A9/AA/AB/AC/AD/AE/AF/AG/AH/AI/AJ/AK/AL/AM/AN/AO/AP/AQ/AR/AS/AT/AU/AV/AW/AX/AY/AZ/Aa/Ab/Ac/Ad/Ae/Af/Ag/Ah/Ai/Aj/Ak/Al/Am/An/Ao/Ap/Aq/Ar/As/At/Au/Av/Aw/Ax=138-285"/>
</dbReference>
<dbReference type="PDB" id="4ZCH">
    <property type="method" value="X-ray"/>
    <property type="resolution" value="2.43 A"/>
    <property type="chains" value="A/B=140-285"/>
</dbReference>
<dbReference type="PDB" id="5Y9J">
    <property type="method" value="X-ray"/>
    <property type="resolution" value="2.05 A"/>
    <property type="chains" value="A=134-285"/>
</dbReference>
<dbReference type="PDB" id="6FXN">
    <property type="method" value="X-ray"/>
    <property type="resolution" value="2.90 A"/>
    <property type="chains" value="A/B/C/J/K/L=134-285"/>
</dbReference>
<dbReference type="PDBsum" id="1JH5"/>
<dbReference type="PDBsum" id="1KD7"/>
<dbReference type="PDBsum" id="1KXG"/>
<dbReference type="PDBsum" id="1OQD"/>
<dbReference type="PDBsum" id="1OQE"/>
<dbReference type="PDBsum" id="1OSG"/>
<dbReference type="PDBsum" id="3V56"/>
<dbReference type="PDBsum" id="4V46"/>
<dbReference type="PDBsum" id="4ZCH"/>
<dbReference type="PDBsum" id="5Y9J"/>
<dbReference type="PDBsum" id="6FXN"/>
<dbReference type="SMR" id="Q9Y275"/>
<dbReference type="BioGRID" id="115915">
    <property type="interactions" value="129"/>
</dbReference>
<dbReference type="CORUM" id="Q9Y275"/>
<dbReference type="DIP" id="DIP-6225N"/>
<dbReference type="FunCoup" id="Q9Y275">
    <property type="interactions" value="489"/>
</dbReference>
<dbReference type="IntAct" id="Q9Y275">
    <property type="interactions" value="106"/>
</dbReference>
<dbReference type="STRING" id="9606.ENSP00000365048"/>
<dbReference type="ChEMBL" id="CHEMBL2364158"/>
<dbReference type="DrugBank" id="DB03316">
    <property type="generic name" value="1,4-Dioxane"/>
</dbReference>
<dbReference type="DrugBank" id="DB08879">
    <property type="generic name" value="Belimumab"/>
</dbReference>
<dbReference type="DrugCentral" id="Q9Y275"/>
<dbReference type="GlyCosmos" id="Q9Y275">
    <property type="glycosylation" value="2 sites, No reported glycans"/>
</dbReference>
<dbReference type="GlyGen" id="Q9Y275">
    <property type="glycosylation" value="4 sites, 2 N-linked glycans (1 site), 1 O-linked glycan (1 site)"/>
</dbReference>
<dbReference type="iPTMnet" id="Q9Y275"/>
<dbReference type="PhosphoSitePlus" id="Q9Y275"/>
<dbReference type="BioMuta" id="TNFSF13B"/>
<dbReference type="DMDM" id="13124573"/>
<dbReference type="jPOST" id="Q9Y275"/>
<dbReference type="MassIVE" id="Q9Y275"/>
<dbReference type="PaxDb" id="9606-ENSP00000365048"/>
<dbReference type="PeptideAtlas" id="Q9Y275"/>
<dbReference type="ProteomicsDB" id="15188"/>
<dbReference type="ProteomicsDB" id="85677">
    <molecule id="Q9Y275-1"/>
</dbReference>
<dbReference type="ProteomicsDB" id="85678">
    <molecule id="Q9Y275-2"/>
</dbReference>
<dbReference type="ABCD" id="Q9Y275">
    <property type="antibodies" value="26 sequenced antibodies"/>
</dbReference>
<dbReference type="Antibodypedia" id="3364">
    <property type="antibodies" value="1685 antibodies from 49 providers"/>
</dbReference>
<dbReference type="DNASU" id="10673"/>
<dbReference type="Ensembl" id="ENST00000375887.9">
    <molecule id="Q9Y275-1"/>
    <property type="protein sequence ID" value="ENSP00000365048.3"/>
    <property type="gene ID" value="ENSG00000102524.12"/>
</dbReference>
<dbReference type="Ensembl" id="ENST00000430559.5">
    <molecule id="Q9Y275-2"/>
    <property type="protein sequence ID" value="ENSP00000389540.1"/>
    <property type="gene ID" value="ENSG00000102524.12"/>
</dbReference>
<dbReference type="Ensembl" id="ENST00000542136.1">
    <molecule id="Q9Y275-3"/>
    <property type="protein sequence ID" value="ENSP00000445334.1"/>
    <property type="gene ID" value="ENSG00000102524.12"/>
</dbReference>
<dbReference type="GeneID" id="10673"/>
<dbReference type="KEGG" id="hsa:10673"/>
<dbReference type="MANE-Select" id="ENST00000375887.9">
    <property type="protein sequence ID" value="ENSP00000365048.3"/>
    <property type="RefSeq nucleotide sequence ID" value="NM_006573.5"/>
    <property type="RefSeq protein sequence ID" value="NP_006564.1"/>
</dbReference>
<dbReference type="UCSC" id="uc001vqr.4">
    <molecule id="Q9Y275-1"/>
    <property type="organism name" value="human"/>
</dbReference>
<dbReference type="AGR" id="HGNC:11929"/>
<dbReference type="CTD" id="10673"/>
<dbReference type="DisGeNET" id="10673"/>
<dbReference type="GeneCards" id="TNFSF13B"/>
<dbReference type="HGNC" id="HGNC:11929">
    <property type="gene designation" value="TNFSF13B"/>
</dbReference>
<dbReference type="HPA" id="ENSG00000102524">
    <property type="expression patterns" value="Tissue enhanced (bone marrow, lymphoid tissue)"/>
</dbReference>
<dbReference type="MIM" id="603969">
    <property type="type" value="gene"/>
</dbReference>
<dbReference type="neXtProt" id="NX_Q9Y275"/>
<dbReference type="OpenTargets" id="ENSG00000102524"/>
<dbReference type="PharmGKB" id="PA434"/>
<dbReference type="VEuPathDB" id="HostDB:ENSG00000102524"/>
<dbReference type="eggNOG" id="ENOG502RX35">
    <property type="taxonomic scope" value="Eukaryota"/>
</dbReference>
<dbReference type="GeneTree" id="ENSGT00940000157536"/>
<dbReference type="HOGENOM" id="CLU_063693_0_0_1"/>
<dbReference type="InParanoid" id="Q9Y275"/>
<dbReference type="OMA" id="RWKSNVV"/>
<dbReference type="OrthoDB" id="5947373at2759"/>
<dbReference type="PAN-GO" id="Q9Y275">
    <property type="GO annotations" value="3 GO annotations based on evolutionary models"/>
</dbReference>
<dbReference type="PhylomeDB" id="Q9Y275"/>
<dbReference type="TreeFam" id="TF332331"/>
<dbReference type="PathwayCommons" id="Q9Y275"/>
<dbReference type="Reactome" id="R-HSA-5668541">
    <property type="pathway name" value="TNFR2 non-canonical NF-kB pathway"/>
</dbReference>
<dbReference type="Reactome" id="R-HSA-5669034">
    <property type="pathway name" value="TNFs bind their physiological receptors"/>
</dbReference>
<dbReference type="Reactome" id="R-HSA-5676594">
    <property type="pathway name" value="TNF receptor superfamily (TNFSF) members mediating non-canonical NF-kB pathway"/>
</dbReference>
<dbReference type="SignaLink" id="Q9Y275"/>
<dbReference type="SIGNOR" id="Q9Y275"/>
<dbReference type="BioGRID-ORCS" id="10673">
    <property type="hits" value="8 hits in 1159 CRISPR screens"/>
</dbReference>
<dbReference type="ChiTaRS" id="TNFSF13B">
    <property type="organism name" value="human"/>
</dbReference>
<dbReference type="EvolutionaryTrace" id="Q9Y275"/>
<dbReference type="GeneWiki" id="B-cell_activating_factor"/>
<dbReference type="GenomeRNAi" id="10673"/>
<dbReference type="Pharos" id="Q9Y275">
    <property type="development level" value="Tclin"/>
</dbReference>
<dbReference type="PRO" id="PR:Q9Y275"/>
<dbReference type="Proteomes" id="UP000005640">
    <property type="component" value="Chromosome 13"/>
</dbReference>
<dbReference type="RNAct" id="Q9Y275">
    <property type="molecule type" value="protein"/>
</dbReference>
<dbReference type="Bgee" id="ENSG00000102524">
    <property type="expression patterns" value="Expressed in monocyte and 156 other cell types or tissues"/>
</dbReference>
<dbReference type="ExpressionAtlas" id="Q9Y275">
    <property type="expression patterns" value="baseline and differential"/>
</dbReference>
<dbReference type="GO" id="GO:0005737">
    <property type="term" value="C:cytoplasm"/>
    <property type="evidence" value="ECO:0000314"/>
    <property type="project" value="UniProtKB"/>
</dbReference>
<dbReference type="GO" id="GO:0005576">
    <property type="term" value="C:extracellular region"/>
    <property type="evidence" value="ECO:0000304"/>
    <property type="project" value="Reactome"/>
</dbReference>
<dbReference type="GO" id="GO:0005615">
    <property type="term" value="C:extracellular space"/>
    <property type="evidence" value="ECO:0000318"/>
    <property type="project" value="GO_Central"/>
</dbReference>
<dbReference type="GO" id="GO:0005925">
    <property type="term" value="C:focal adhesion"/>
    <property type="evidence" value="ECO:0000314"/>
    <property type="project" value="HPA"/>
</dbReference>
<dbReference type="GO" id="GO:0043231">
    <property type="term" value="C:intracellular membrane-bounded organelle"/>
    <property type="evidence" value="ECO:0000314"/>
    <property type="project" value="HPA"/>
</dbReference>
<dbReference type="GO" id="GO:0016020">
    <property type="term" value="C:membrane"/>
    <property type="evidence" value="ECO:0000303"/>
    <property type="project" value="UniProtKB"/>
</dbReference>
<dbReference type="GO" id="GO:0048471">
    <property type="term" value="C:perinuclear region of cytoplasm"/>
    <property type="evidence" value="ECO:0000314"/>
    <property type="project" value="UniProtKB"/>
</dbReference>
<dbReference type="GO" id="GO:0005886">
    <property type="term" value="C:plasma membrane"/>
    <property type="evidence" value="ECO:0000314"/>
    <property type="project" value="HPA"/>
</dbReference>
<dbReference type="GO" id="GO:0005125">
    <property type="term" value="F:cytokine activity"/>
    <property type="evidence" value="ECO:0007669"/>
    <property type="project" value="UniProtKB-KW"/>
</dbReference>
<dbReference type="GO" id="GO:0048018">
    <property type="term" value="F:receptor ligand activity"/>
    <property type="evidence" value="ECO:0000318"/>
    <property type="project" value="GO_Central"/>
</dbReference>
<dbReference type="GO" id="GO:0005102">
    <property type="term" value="F:signaling receptor binding"/>
    <property type="evidence" value="ECO:0000304"/>
    <property type="project" value="ProtInc"/>
</dbReference>
<dbReference type="GO" id="GO:0005164">
    <property type="term" value="F:tumor necrosis factor receptor binding"/>
    <property type="evidence" value="ECO:0007669"/>
    <property type="project" value="InterPro"/>
</dbReference>
<dbReference type="GO" id="GO:0031296">
    <property type="term" value="P:B cell costimulation"/>
    <property type="evidence" value="ECO:0007669"/>
    <property type="project" value="Ensembl"/>
</dbReference>
<dbReference type="GO" id="GO:0001782">
    <property type="term" value="P:B cell homeostasis"/>
    <property type="evidence" value="ECO:0007669"/>
    <property type="project" value="Ensembl"/>
</dbReference>
<dbReference type="GO" id="GO:0042100">
    <property type="term" value="P:B cell proliferation"/>
    <property type="evidence" value="ECO:0007669"/>
    <property type="project" value="Ensembl"/>
</dbReference>
<dbReference type="GO" id="GO:0002467">
    <property type="term" value="P:germinal center formation"/>
    <property type="evidence" value="ECO:0007669"/>
    <property type="project" value="Ensembl"/>
</dbReference>
<dbReference type="GO" id="GO:0030890">
    <property type="term" value="P:positive regulation of B cell proliferation"/>
    <property type="evidence" value="ECO:0000315"/>
    <property type="project" value="AgBase"/>
</dbReference>
<dbReference type="GO" id="GO:0002636">
    <property type="term" value="P:positive regulation of germinal center formation"/>
    <property type="evidence" value="ECO:0007669"/>
    <property type="project" value="Ensembl"/>
</dbReference>
<dbReference type="GO" id="GO:0042102">
    <property type="term" value="P:positive regulation of T cell proliferation"/>
    <property type="evidence" value="ECO:0007669"/>
    <property type="project" value="Ensembl"/>
</dbReference>
<dbReference type="GO" id="GO:0007165">
    <property type="term" value="P:signal transduction"/>
    <property type="evidence" value="ECO:0000304"/>
    <property type="project" value="ProtInc"/>
</dbReference>
<dbReference type="GO" id="GO:0043588">
    <property type="term" value="P:skin development"/>
    <property type="evidence" value="ECO:0007669"/>
    <property type="project" value="Ensembl"/>
</dbReference>
<dbReference type="GO" id="GO:0031295">
    <property type="term" value="P:T cell costimulation"/>
    <property type="evidence" value="ECO:0007669"/>
    <property type="project" value="Ensembl"/>
</dbReference>
<dbReference type="GO" id="GO:0042098">
    <property type="term" value="P:T cell proliferation"/>
    <property type="evidence" value="ECO:0007669"/>
    <property type="project" value="Ensembl"/>
</dbReference>
<dbReference type="GO" id="GO:0002333">
    <property type="term" value="P:transitional one stage B cell differentiation"/>
    <property type="evidence" value="ECO:0007669"/>
    <property type="project" value="Ensembl"/>
</dbReference>
<dbReference type="GO" id="GO:0033209">
    <property type="term" value="P:tumor necrosis factor-mediated signaling pathway"/>
    <property type="evidence" value="ECO:0007669"/>
    <property type="project" value="Ensembl"/>
</dbReference>
<dbReference type="CDD" id="cd00184">
    <property type="entry name" value="TNF"/>
    <property type="match status" value="1"/>
</dbReference>
<dbReference type="FunFam" id="2.60.120.40:FF:000019">
    <property type="entry name" value="Tumor necrosis factor ligand superfamily member 13B"/>
    <property type="match status" value="1"/>
</dbReference>
<dbReference type="Gene3D" id="2.60.120.40">
    <property type="match status" value="1"/>
</dbReference>
<dbReference type="InterPro" id="IPR006052">
    <property type="entry name" value="TNF_dom"/>
</dbReference>
<dbReference type="InterPro" id="IPR051748">
    <property type="entry name" value="TNF_Ligand_Superfamily"/>
</dbReference>
<dbReference type="InterPro" id="IPR008983">
    <property type="entry name" value="Tumour_necrosis_fac-like_dom"/>
</dbReference>
<dbReference type="PANTHER" id="PTHR15151">
    <property type="entry name" value="PROTEIN EIGER"/>
    <property type="match status" value="1"/>
</dbReference>
<dbReference type="PANTHER" id="PTHR15151:SF2">
    <property type="entry name" value="TUMOR NECROSIS FACTOR LIGAND SUPERFAMILY MEMBER 13B"/>
    <property type="match status" value="1"/>
</dbReference>
<dbReference type="Pfam" id="PF00229">
    <property type="entry name" value="TNF"/>
    <property type="match status" value="1"/>
</dbReference>
<dbReference type="SUPFAM" id="SSF49842">
    <property type="entry name" value="TNF-like"/>
    <property type="match status" value="1"/>
</dbReference>
<dbReference type="PROSITE" id="PS50049">
    <property type="entry name" value="THD_2"/>
    <property type="match status" value="1"/>
</dbReference>
<reference key="1">
    <citation type="journal article" date="1999" name="J. Leukoc. Biol.">
        <title>TALL-1 is a novel member of the TNF family that is down-regulated by mitogens.</title>
        <authorList>
            <person name="Shu H.-B."/>
            <person name="Hu W.-H."/>
            <person name="Johnson H."/>
        </authorList>
    </citation>
    <scope>NUCLEOTIDE SEQUENCE [MRNA] (ISOFORM 1)</scope>
</reference>
<reference key="2">
    <citation type="journal article" date="1999" name="J. Exp. Med.">
        <title>BAFF, a novel ligand of the tumor necrosis factor family, stimulates B cell growth.</title>
        <authorList>
            <person name="Schneider P."/>
            <person name="MacKay F."/>
            <person name="Steiner V."/>
            <person name="Hofmann K."/>
            <person name="Bodmer J.-L."/>
            <person name="Holler N."/>
            <person name="Ambrose C."/>
            <person name="Lawton P."/>
            <person name="Bixler S."/>
            <person name="Acha-Orbea H."/>
            <person name="Valmori D."/>
            <person name="Romero P."/>
            <person name="Werner-Favre C."/>
            <person name="Zubler R.H."/>
            <person name="Browning J.L."/>
            <person name="Tschopp J."/>
        </authorList>
    </citation>
    <scope>NUCLEOTIDE SEQUENCE [MRNA] (ISOFORM 1)</scope>
    <scope>PROTEIN SEQUENCE OF 134-148</scope>
</reference>
<reference key="3">
    <citation type="journal article" date="1999" name="Science">
        <title>BLyS: member of the tumor necrosis factor family and B lymphocyte stimulator.</title>
        <authorList>
            <person name="Moore P.A."/>
            <person name="Belvedere O."/>
            <person name="Orr A."/>
            <person name="Pieri K."/>
            <person name="LaFleur D.W."/>
            <person name="Feng P."/>
            <person name="Soppet D."/>
            <person name="Charters M."/>
            <person name="Gentz R."/>
            <person name="Parmelee D."/>
            <person name="Li Y."/>
            <person name="Galperina O."/>
            <person name="Giri J."/>
            <person name="Roschke V."/>
            <person name="Nardelli B."/>
            <person name="Carrell J."/>
            <person name="Sosnovtseva S."/>
            <person name="Greenfield W."/>
            <person name="Ruben S.M."/>
            <person name="Olsen H.S."/>
            <person name="Fikes J."/>
            <person name="Hilbert D.M."/>
        </authorList>
    </citation>
    <scope>NUCLEOTIDE SEQUENCE [MRNA] (ISOFORM 1)</scope>
    <source>
        <tissue>Monocyte</tissue>
        <tissue>Neutrophil</tissue>
    </source>
</reference>
<reference key="4">
    <citation type="journal article" date="2003" name="J. Biol. Chem.">
        <title>DeltaBAFF, an alternate splice isoform that regulates receptor binding and biopresentation of the B cell survival cytokine, BAFF.</title>
        <authorList>
            <person name="Gavin A.L."/>
            <person name="Ait-Azzouzene D."/>
            <person name="Ware C.F."/>
            <person name="Nemazee D."/>
        </authorList>
    </citation>
    <scope>NUCLEOTIDE SEQUENCE [MRNA] (ISOFORM 2)</scope>
    <scope>TISSUE SPECIFICITY</scope>
    <scope>SUBUNIT</scope>
</reference>
<reference key="5">
    <citation type="journal article" date="2012" name="J. Autoimmun.">
        <title>The complexity of the BAFF TNF-family members: implications for autoimmunity.</title>
        <authorList>
            <person name="Lahiri A."/>
            <person name="Pochard P."/>
            <person name="Le Pottier L."/>
            <person name="Tobon G.J."/>
            <person name="Bendaoud B."/>
            <person name="Youinou P."/>
            <person name="Pers J.O."/>
        </authorList>
    </citation>
    <scope>NUCLEOTIDE SEQUENCE [MRNA] (ISOFORM 3)</scope>
    <scope>FUNCTION (ISOFORM 3)</scope>
    <scope>SUBUNIT</scope>
    <scope>ALTERNATIVE SPLICING</scope>
</reference>
<reference key="6">
    <citation type="submission" date="1999-10" db="EMBL/GenBank/DDBJ databases">
        <title>Homo sapiens homolog of tumor necrosis factor.</title>
        <authorList>
            <person name="Farrah T."/>
            <person name="Gross J."/>
            <person name="Piddington C."/>
            <person name="O'Hara P."/>
        </authorList>
    </citation>
    <scope>NUCLEOTIDE SEQUENCE [MRNA] (ISOFORM 1)</scope>
</reference>
<reference key="7">
    <citation type="submission" date="1999-03" db="EMBL/GenBank/DDBJ databases">
        <title>A novel dendritic cell-derived TNF-like molecule.</title>
        <authorList>
            <person name="Zhang W."/>
            <person name="Wan T."/>
            <person name="Yu Y."/>
            <person name="Cao X."/>
        </authorList>
    </citation>
    <scope>NUCLEOTIDE SEQUENCE [MRNA] (ISOFORM 1)</scope>
    <source>
        <tissue>Dendritic cell</tissue>
    </source>
</reference>
<reference key="8">
    <citation type="submission" date="2002-07" db="EMBL/GenBank/DDBJ databases">
        <authorList>
            <person name="Gao H."/>
            <person name="He F."/>
            <person name="Li R."/>
        </authorList>
    </citation>
    <scope>NUCLEOTIDE SEQUENCE [MRNA] (ISOFORM 1)</scope>
</reference>
<reference key="9">
    <citation type="submission" date="2006-10" db="EMBL/GenBank/DDBJ databases">
        <authorList>
            <person name="Livingston R.J."/>
            <person name="Shaffer T."/>
            <person name="McFarland I."/>
            <person name="Nguyen C.P."/>
            <person name="Stanaway I.B."/>
            <person name="Rajkumar N."/>
            <person name="Johnson E.J."/>
            <person name="da Ponte S.H."/>
            <person name="Willa H."/>
            <person name="Ahearn M.O."/>
            <person name="Bertucci C."/>
            <person name="Acklestad J."/>
            <person name="Carroll A."/>
            <person name="Swanson J."/>
            <person name="Gildersleeve H.I."/>
            <person name="Nickerson D.A."/>
        </authorList>
    </citation>
    <scope>NUCLEOTIDE SEQUENCE [GENOMIC DNA]</scope>
</reference>
<reference key="10">
    <citation type="journal article" date="2003" name="Genome Res.">
        <title>The secreted protein discovery initiative (SPDI), a large-scale effort to identify novel human secreted and transmembrane proteins: a bioinformatics assessment.</title>
        <authorList>
            <person name="Clark H.F."/>
            <person name="Gurney A.L."/>
            <person name="Abaya E."/>
            <person name="Baker K."/>
            <person name="Baldwin D.T."/>
            <person name="Brush J."/>
            <person name="Chen J."/>
            <person name="Chow B."/>
            <person name="Chui C."/>
            <person name="Crowley C."/>
            <person name="Currell B."/>
            <person name="Deuel B."/>
            <person name="Dowd P."/>
            <person name="Eaton D."/>
            <person name="Foster J.S."/>
            <person name="Grimaldi C."/>
            <person name="Gu Q."/>
            <person name="Hass P.E."/>
            <person name="Heldens S."/>
            <person name="Huang A."/>
            <person name="Kim H.S."/>
            <person name="Klimowski L."/>
            <person name="Jin Y."/>
            <person name="Johnson S."/>
            <person name="Lee J."/>
            <person name="Lewis L."/>
            <person name="Liao D."/>
            <person name="Mark M.R."/>
            <person name="Robbie E."/>
            <person name="Sanchez C."/>
            <person name="Schoenfeld J."/>
            <person name="Seshagiri S."/>
            <person name="Simmons L."/>
            <person name="Singh J."/>
            <person name="Smith V."/>
            <person name="Stinson J."/>
            <person name="Vagts A."/>
            <person name="Vandlen R.L."/>
            <person name="Watanabe C."/>
            <person name="Wieand D."/>
            <person name="Woods K."/>
            <person name="Xie M.-H."/>
            <person name="Yansura D.G."/>
            <person name="Yi S."/>
            <person name="Yu G."/>
            <person name="Yuan J."/>
            <person name="Zhang M."/>
            <person name="Zhang Z."/>
            <person name="Goddard A.D."/>
            <person name="Wood W.I."/>
            <person name="Godowski P.J."/>
            <person name="Gray A.M."/>
        </authorList>
    </citation>
    <scope>NUCLEOTIDE SEQUENCE [LARGE SCALE MRNA] (ISOFORM 1)</scope>
</reference>
<reference key="11">
    <citation type="submission" date="2004-06" db="EMBL/GenBank/DDBJ databases">
        <title>Cloning of human full open reading frames in Gateway(TM) system entry vector (pDONR201).</title>
        <authorList>
            <person name="Ebert L."/>
            <person name="Schick M."/>
            <person name="Neubert P."/>
            <person name="Schatten R."/>
            <person name="Henze S."/>
            <person name="Korn B."/>
        </authorList>
    </citation>
    <scope>NUCLEOTIDE SEQUENCE [LARGE SCALE MRNA] (ISOFORM 1)</scope>
</reference>
<reference key="12">
    <citation type="journal article" date="2004" name="Nature">
        <title>The DNA sequence and analysis of human chromosome 13.</title>
        <authorList>
            <person name="Dunham A."/>
            <person name="Matthews L.H."/>
            <person name="Burton J."/>
            <person name="Ashurst J.L."/>
            <person name="Howe K.L."/>
            <person name="Ashcroft K.J."/>
            <person name="Beare D.M."/>
            <person name="Burford D.C."/>
            <person name="Hunt S.E."/>
            <person name="Griffiths-Jones S."/>
            <person name="Jones M.C."/>
            <person name="Keenan S.J."/>
            <person name="Oliver K."/>
            <person name="Scott C.E."/>
            <person name="Ainscough R."/>
            <person name="Almeida J.P."/>
            <person name="Ambrose K.D."/>
            <person name="Andrews D.T."/>
            <person name="Ashwell R.I.S."/>
            <person name="Babbage A.K."/>
            <person name="Bagguley C.L."/>
            <person name="Bailey J."/>
            <person name="Bannerjee R."/>
            <person name="Barlow K.F."/>
            <person name="Bates K."/>
            <person name="Beasley H."/>
            <person name="Bird C.P."/>
            <person name="Bray-Allen S."/>
            <person name="Brown A.J."/>
            <person name="Brown J.Y."/>
            <person name="Burrill W."/>
            <person name="Carder C."/>
            <person name="Carter N.P."/>
            <person name="Chapman J.C."/>
            <person name="Clamp M.E."/>
            <person name="Clark S.Y."/>
            <person name="Clarke G."/>
            <person name="Clee C.M."/>
            <person name="Clegg S.C."/>
            <person name="Cobley V."/>
            <person name="Collins J.E."/>
            <person name="Corby N."/>
            <person name="Coville G.J."/>
            <person name="Deloukas P."/>
            <person name="Dhami P."/>
            <person name="Dunham I."/>
            <person name="Dunn M."/>
            <person name="Earthrowl M.E."/>
            <person name="Ellington A.G."/>
            <person name="Faulkner L."/>
            <person name="Frankish A.G."/>
            <person name="Frankland J."/>
            <person name="French L."/>
            <person name="Garner P."/>
            <person name="Garnett J."/>
            <person name="Gilbert J.G.R."/>
            <person name="Gilson C.J."/>
            <person name="Ghori J."/>
            <person name="Grafham D.V."/>
            <person name="Gribble S.M."/>
            <person name="Griffiths C."/>
            <person name="Hall R.E."/>
            <person name="Hammond S."/>
            <person name="Harley J.L."/>
            <person name="Hart E.A."/>
            <person name="Heath P.D."/>
            <person name="Howden P.J."/>
            <person name="Huckle E.J."/>
            <person name="Hunt P.J."/>
            <person name="Hunt A.R."/>
            <person name="Johnson C."/>
            <person name="Johnson D."/>
            <person name="Kay M."/>
            <person name="Kimberley A.M."/>
            <person name="King A."/>
            <person name="Laird G.K."/>
            <person name="Langford C.J."/>
            <person name="Lawlor S."/>
            <person name="Leongamornlert D.A."/>
            <person name="Lloyd D.M."/>
            <person name="Lloyd C."/>
            <person name="Loveland J.E."/>
            <person name="Lovell J."/>
            <person name="Martin S."/>
            <person name="Mashreghi-Mohammadi M."/>
            <person name="McLaren S.J."/>
            <person name="McMurray A."/>
            <person name="Milne S."/>
            <person name="Moore M.J.F."/>
            <person name="Nickerson T."/>
            <person name="Palmer S.A."/>
            <person name="Pearce A.V."/>
            <person name="Peck A.I."/>
            <person name="Pelan S."/>
            <person name="Phillimore B."/>
            <person name="Porter K.M."/>
            <person name="Rice C.M."/>
            <person name="Searle S."/>
            <person name="Sehra H.K."/>
            <person name="Shownkeen R."/>
            <person name="Skuce C.D."/>
            <person name="Smith M."/>
            <person name="Steward C.A."/>
            <person name="Sycamore N."/>
            <person name="Tester J."/>
            <person name="Thomas D.W."/>
            <person name="Tracey A."/>
            <person name="Tromans A."/>
            <person name="Tubby B."/>
            <person name="Wall M."/>
            <person name="Wallis J.M."/>
            <person name="West A.P."/>
            <person name="Whitehead S.L."/>
            <person name="Willey D.L."/>
            <person name="Wilming L."/>
            <person name="Wray P.W."/>
            <person name="Wright M.W."/>
            <person name="Young L."/>
            <person name="Coulson A."/>
            <person name="Durbin R.M."/>
            <person name="Hubbard T."/>
            <person name="Sulston J.E."/>
            <person name="Beck S."/>
            <person name="Bentley D.R."/>
            <person name="Rogers J."/>
            <person name="Ross M.T."/>
        </authorList>
    </citation>
    <scope>NUCLEOTIDE SEQUENCE [LARGE SCALE GENOMIC DNA]</scope>
</reference>
<reference key="13">
    <citation type="submission" date="2005-07" db="EMBL/GenBank/DDBJ databases">
        <authorList>
            <person name="Mural R.J."/>
            <person name="Istrail S."/>
            <person name="Sutton G.G."/>
            <person name="Florea L."/>
            <person name="Halpern A.L."/>
            <person name="Mobarry C.M."/>
            <person name="Lippert R."/>
            <person name="Walenz B."/>
            <person name="Shatkay H."/>
            <person name="Dew I."/>
            <person name="Miller J.R."/>
            <person name="Flanigan M.J."/>
            <person name="Edwards N.J."/>
            <person name="Bolanos R."/>
            <person name="Fasulo D."/>
            <person name="Halldorsson B.V."/>
            <person name="Hannenhalli S."/>
            <person name="Turner R."/>
            <person name="Yooseph S."/>
            <person name="Lu F."/>
            <person name="Nusskern D.R."/>
            <person name="Shue B.C."/>
            <person name="Zheng X.H."/>
            <person name="Zhong F."/>
            <person name="Delcher A.L."/>
            <person name="Huson D.H."/>
            <person name="Kravitz S.A."/>
            <person name="Mouchard L."/>
            <person name="Reinert K."/>
            <person name="Remington K.A."/>
            <person name="Clark A.G."/>
            <person name="Waterman M.S."/>
            <person name="Eichler E.E."/>
            <person name="Adams M.D."/>
            <person name="Hunkapiller M.W."/>
            <person name="Myers E.W."/>
            <person name="Venter J.C."/>
        </authorList>
    </citation>
    <scope>NUCLEOTIDE SEQUENCE [LARGE SCALE GENOMIC DNA]</scope>
</reference>
<reference key="14">
    <citation type="journal article" date="2004" name="Genome Res.">
        <title>The status, quality, and expansion of the NIH full-length cDNA project: the Mammalian Gene Collection (MGC).</title>
        <authorList>
            <consortium name="The MGC Project Team"/>
        </authorList>
    </citation>
    <scope>NUCLEOTIDE SEQUENCE [LARGE SCALE MRNA] (ISOFORM 1)</scope>
    <source>
        <tissue>Placenta</tissue>
    </source>
</reference>
<reference key="15">
    <citation type="submission" date="2001-10" db="EMBL/GenBank/DDBJ databases">
        <title>New polymorphisms of human BLyS gene.</title>
        <authorList>
            <person name="Kawasaki A."/>
            <person name="Tsuchiya N."/>
            <person name="Fukazawa T."/>
            <person name="Hashimoto H."/>
            <person name="Tokunaga K."/>
        </authorList>
    </citation>
    <scope>NUCLEOTIDE SEQUENCE [GENOMIC DNA] OF 1-135</scope>
    <scope>VARIANT THR-105</scope>
</reference>
<reference key="16">
    <citation type="journal article" date="2000" name="Nat. Immunol.">
        <title>APRIL and TALL-I and receptors BCMA and TACI: system for regulating humoral immunity.</title>
        <authorList>
            <person name="Yu G."/>
            <person name="Boone T."/>
            <person name="Delaney J."/>
            <person name="Hawkins N."/>
            <person name="Kelley M.J."/>
            <person name="Ramakrishnan M."/>
            <person name="McCabe S."/>
            <person name="Qiu W.R."/>
            <person name="Kornuc M."/>
            <person name="Xia X.-Z."/>
            <person name="Guo J."/>
            <person name="Stolina M."/>
            <person name="Boyle W.J."/>
            <person name="Sarosi I."/>
            <person name="Hsu H."/>
            <person name="Senaldi G."/>
            <person name="Theill L.E."/>
        </authorList>
    </citation>
    <scope>FUNCTION</scope>
</reference>
<reference key="17">
    <citation type="journal article" date="2002" name="Cell">
        <title>Crystal structure of sTALL-1 reveals a virus-like assembly of TNF family ligands.</title>
        <authorList>
            <person name="Liu Y."/>
            <person name="Xu L."/>
            <person name="Opalka N."/>
            <person name="Kappler J."/>
            <person name="Shu H.-B."/>
            <person name="Zhang G."/>
        </authorList>
    </citation>
    <scope>X-RAY CRYSTALLOGRAPHY (3.0 ANGSTROMS) OF 142-285</scope>
</reference>
<reference key="18">
    <citation type="journal article" date="2002" name="J. Mol. Biol.">
        <title>Crystal structure of extracellular human BAFF, a TNF family member that stimulates B lymphocytes.</title>
        <authorList>
            <person name="Karpusas M."/>
            <person name="Cachero T.G."/>
            <person name="Qian F."/>
            <person name="Boriack-Sjodin A."/>
            <person name="Mullen C."/>
            <person name="Strauch K."/>
            <person name="Hsu Y.-M."/>
            <person name="Kalled S.L."/>
        </authorList>
    </citation>
    <scope>X-RAY CRYSTALLOGRAPHY (2.8 ANGSTROMS) OF 136-285</scope>
</reference>
<reference key="19">
    <citation type="journal article" date="2002" name="Nat. Struct. Biol.">
        <title>Structural basis of BLyS receptor recognition.</title>
        <authorList>
            <person name="Oren D.A."/>
            <person name="Li Y."/>
            <person name="Volovik Y."/>
            <person name="Morris T.S."/>
            <person name="Dharia C."/>
            <person name="Das K."/>
            <person name="Galperina O."/>
            <person name="Gentz R."/>
            <person name="Arnold E."/>
        </authorList>
    </citation>
    <scope>X-RAY CRYSTALLOGRAPHY (2.0 ANGSTROMS) OF 134-285</scope>
</reference>